<protein>
    <recommendedName>
        <fullName evidence="1">Queuine tRNA-ribosyltransferase</fullName>
        <ecNumber evidence="1">2.4.2.29</ecNumber>
    </recommendedName>
    <alternativeName>
        <fullName evidence="1">Guanine insertion enzyme</fullName>
    </alternativeName>
    <alternativeName>
        <fullName evidence="1">tRNA-guanine transglycosylase</fullName>
    </alternativeName>
</protein>
<comment type="function">
    <text evidence="1">Catalyzes the base-exchange of a guanine (G) residue with the queuine precursor 7-aminomethyl-7-deazaguanine (PreQ1) at position 34 (anticodon wobble position) in tRNAs with GU(N) anticodons (tRNA-Asp, -Asn, -His and -Tyr). Catalysis occurs through a double-displacement mechanism. The nucleophile active site attacks the C1' of nucleotide 34 to detach the guanine base from the RNA, forming a covalent enzyme-RNA intermediate. The proton acceptor active site deprotonates the incoming PreQ1, allowing a nucleophilic attack on the C1' of the ribose to form the product. After dissociation, two additional enzymatic reactions on the tRNA convert PreQ1 to queuine (Q), resulting in the hypermodified nucleoside queuosine (7-(((4,5-cis-dihydroxy-2-cyclopenten-1-yl)amino)methyl)-7-deazaguanosine).</text>
</comment>
<comment type="catalytic activity">
    <reaction evidence="1">
        <text>7-aminomethyl-7-carbaguanine + guanosine(34) in tRNA = 7-aminomethyl-7-carbaguanosine(34) in tRNA + guanine</text>
        <dbReference type="Rhea" id="RHEA:24104"/>
        <dbReference type="Rhea" id="RHEA-COMP:10341"/>
        <dbReference type="Rhea" id="RHEA-COMP:10342"/>
        <dbReference type="ChEBI" id="CHEBI:16235"/>
        <dbReference type="ChEBI" id="CHEBI:58703"/>
        <dbReference type="ChEBI" id="CHEBI:74269"/>
        <dbReference type="ChEBI" id="CHEBI:82833"/>
        <dbReference type="EC" id="2.4.2.29"/>
    </reaction>
</comment>
<comment type="cofactor">
    <cofactor evidence="1">
        <name>Zn(2+)</name>
        <dbReference type="ChEBI" id="CHEBI:29105"/>
    </cofactor>
    <text evidence="1">Binds 1 zinc ion per subunit.</text>
</comment>
<comment type="pathway">
    <text evidence="1">tRNA modification; tRNA-queuosine biosynthesis.</text>
</comment>
<comment type="subunit">
    <text evidence="1">Homodimer. Within each dimer, one monomer is responsible for RNA recognition and catalysis, while the other monomer binds to the replacement base PreQ1.</text>
</comment>
<comment type="similarity">
    <text evidence="1">Belongs to the queuine tRNA-ribosyltransferase family.</text>
</comment>
<sequence>MKYELQKTDGRARRGRLVFERGVVETPAFMPVGTYGTVKGMTPEEVKETGAQILLGNTFHLWLRPGQEIMKLHGDLHDFMQWHGPILTDSGGFQVFSLGAMRKIKEEGVHFKNPINGDSVFLSPEKSMEIQYDLGSDIVMIFDECTPYPADWDYAKRSMEMSLRWAARSRQRFDELNNKNALFGIIQGGVYEDLRDVSVKGLVDIGFDGYAVGGLAVGEPKEDMHRILEHVCPQIPEDKPRYLMGVGKPEDLVEGVRRGIDMFDCVMPTRNARNGHLFVTDGVVKIRNAKHKDDTATLDEHCDCYTCRHYSRAYLHHLDRCNEILGARLNTIHNLRYYQRLMAGLRQAIEEGKLEHFVEDFYGRIGKPVPPLNV</sequence>
<organism>
    <name type="scientific">Yersinia pestis bv. Antiqua (strain Nepal516)</name>
    <dbReference type="NCBI Taxonomy" id="377628"/>
    <lineage>
        <taxon>Bacteria</taxon>
        <taxon>Pseudomonadati</taxon>
        <taxon>Pseudomonadota</taxon>
        <taxon>Gammaproteobacteria</taxon>
        <taxon>Enterobacterales</taxon>
        <taxon>Yersiniaceae</taxon>
        <taxon>Yersinia</taxon>
    </lineage>
</organism>
<dbReference type="EC" id="2.4.2.29" evidence="1"/>
<dbReference type="EMBL" id="CP000305">
    <property type="protein sequence ID" value="ABG17228.1"/>
    <property type="molecule type" value="Genomic_DNA"/>
</dbReference>
<dbReference type="EMBL" id="ACNQ01000008">
    <property type="protein sequence ID" value="EEO77312.1"/>
    <property type="molecule type" value="Genomic_DNA"/>
</dbReference>
<dbReference type="RefSeq" id="WP_002208672.1">
    <property type="nucleotide sequence ID" value="NZ_ACNQ01000008.1"/>
</dbReference>
<dbReference type="SMR" id="Q1CLA2"/>
<dbReference type="GeneID" id="57975522"/>
<dbReference type="KEGG" id="ypn:YPN_0896"/>
<dbReference type="HOGENOM" id="CLU_022060_0_1_6"/>
<dbReference type="UniPathway" id="UPA00392"/>
<dbReference type="Proteomes" id="UP000008936">
    <property type="component" value="Chromosome"/>
</dbReference>
<dbReference type="GO" id="GO:0005829">
    <property type="term" value="C:cytosol"/>
    <property type="evidence" value="ECO:0007669"/>
    <property type="project" value="TreeGrafter"/>
</dbReference>
<dbReference type="GO" id="GO:0046872">
    <property type="term" value="F:metal ion binding"/>
    <property type="evidence" value="ECO:0007669"/>
    <property type="project" value="UniProtKB-KW"/>
</dbReference>
<dbReference type="GO" id="GO:0008479">
    <property type="term" value="F:tRNA-guanosine(34) queuine transglycosylase activity"/>
    <property type="evidence" value="ECO:0007669"/>
    <property type="project" value="UniProtKB-UniRule"/>
</dbReference>
<dbReference type="GO" id="GO:0008616">
    <property type="term" value="P:queuosine biosynthetic process"/>
    <property type="evidence" value="ECO:0007669"/>
    <property type="project" value="UniProtKB-UniRule"/>
</dbReference>
<dbReference type="GO" id="GO:0002099">
    <property type="term" value="P:tRNA wobble guanine modification"/>
    <property type="evidence" value="ECO:0007669"/>
    <property type="project" value="TreeGrafter"/>
</dbReference>
<dbReference type="GO" id="GO:0101030">
    <property type="term" value="P:tRNA-guanine transglycosylation"/>
    <property type="evidence" value="ECO:0007669"/>
    <property type="project" value="InterPro"/>
</dbReference>
<dbReference type="FunFam" id="3.20.20.105:FF:000001">
    <property type="entry name" value="Queuine tRNA-ribosyltransferase"/>
    <property type="match status" value="1"/>
</dbReference>
<dbReference type="Gene3D" id="3.20.20.105">
    <property type="entry name" value="Queuine tRNA-ribosyltransferase-like"/>
    <property type="match status" value="1"/>
</dbReference>
<dbReference type="HAMAP" id="MF_00168">
    <property type="entry name" value="Q_tRNA_Tgt"/>
    <property type="match status" value="1"/>
</dbReference>
<dbReference type="InterPro" id="IPR050076">
    <property type="entry name" value="ArchSynthase1/Queuine_TRR"/>
</dbReference>
<dbReference type="InterPro" id="IPR004803">
    <property type="entry name" value="TGT"/>
</dbReference>
<dbReference type="InterPro" id="IPR036511">
    <property type="entry name" value="TGT-like_sf"/>
</dbReference>
<dbReference type="InterPro" id="IPR002616">
    <property type="entry name" value="tRNA_ribo_trans-like"/>
</dbReference>
<dbReference type="NCBIfam" id="TIGR00430">
    <property type="entry name" value="Q_tRNA_tgt"/>
    <property type="match status" value="1"/>
</dbReference>
<dbReference type="NCBIfam" id="TIGR00449">
    <property type="entry name" value="tgt_general"/>
    <property type="match status" value="1"/>
</dbReference>
<dbReference type="PANTHER" id="PTHR46499">
    <property type="entry name" value="QUEUINE TRNA-RIBOSYLTRANSFERASE"/>
    <property type="match status" value="1"/>
</dbReference>
<dbReference type="PANTHER" id="PTHR46499:SF1">
    <property type="entry name" value="QUEUINE TRNA-RIBOSYLTRANSFERASE"/>
    <property type="match status" value="1"/>
</dbReference>
<dbReference type="Pfam" id="PF01702">
    <property type="entry name" value="TGT"/>
    <property type="match status" value="1"/>
</dbReference>
<dbReference type="SUPFAM" id="SSF51713">
    <property type="entry name" value="tRNA-guanine transglycosylase"/>
    <property type="match status" value="1"/>
</dbReference>
<accession>Q1CLA2</accession>
<accession>C4GQH1</accession>
<feature type="chain" id="PRO_1000016893" description="Queuine tRNA-ribosyltransferase">
    <location>
        <begin position="1"/>
        <end position="374"/>
    </location>
</feature>
<feature type="region of interest" description="RNA binding" evidence="1">
    <location>
        <begin position="245"/>
        <end position="251"/>
    </location>
</feature>
<feature type="region of interest" description="RNA binding; important for wobble base 34 recognition" evidence="1">
    <location>
        <begin position="269"/>
        <end position="273"/>
    </location>
</feature>
<feature type="active site" description="Proton acceptor" evidence="1">
    <location>
        <position position="89"/>
    </location>
</feature>
<feature type="active site" description="Nucleophile" evidence="1">
    <location>
        <position position="264"/>
    </location>
</feature>
<feature type="binding site" evidence="1">
    <location>
        <begin position="89"/>
        <end position="93"/>
    </location>
    <ligand>
        <name>substrate</name>
    </ligand>
</feature>
<feature type="binding site" evidence="1">
    <location>
        <position position="143"/>
    </location>
    <ligand>
        <name>substrate</name>
    </ligand>
</feature>
<feature type="binding site" evidence="1">
    <location>
        <position position="187"/>
    </location>
    <ligand>
        <name>substrate</name>
    </ligand>
</feature>
<feature type="binding site" evidence="1">
    <location>
        <position position="214"/>
    </location>
    <ligand>
        <name>substrate</name>
    </ligand>
</feature>
<feature type="binding site" evidence="1">
    <location>
        <position position="302"/>
    </location>
    <ligand>
        <name>Zn(2+)</name>
        <dbReference type="ChEBI" id="CHEBI:29105"/>
    </ligand>
</feature>
<feature type="binding site" evidence="1">
    <location>
        <position position="304"/>
    </location>
    <ligand>
        <name>Zn(2+)</name>
        <dbReference type="ChEBI" id="CHEBI:29105"/>
    </ligand>
</feature>
<feature type="binding site" evidence="1">
    <location>
        <position position="307"/>
    </location>
    <ligand>
        <name>Zn(2+)</name>
        <dbReference type="ChEBI" id="CHEBI:29105"/>
    </ligand>
</feature>
<feature type="binding site" evidence="1">
    <location>
        <position position="333"/>
    </location>
    <ligand>
        <name>Zn(2+)</name>
        <dbReference type="ChEBI" id="CHEBI:29105"/>
    </ligand>
</feature>
<gene>
    <name evidence="1" type="primary">tgt</name>
    <name type="ordered locus">YPN_0896</name>
    <name type="ORF">YP516_0971</name>
</gene>
<evidence type="ECO:0000255" key="1">
    <source>
        <dbReference type="HAMAP-Rule" id="MF_00168"/>
    </source>
</evidence>
<keyword id="KW-0328">Glycosyltransferase</keyword>
<keyword id="KW-0479">Metal-binding</keyword>
<keyword id="KW-0671">Queuosine biosynthesis</keyword>
<keyword id="KW-0808">Transferase</keyword>
<keyword id="KW-0819">tRNA processing</keyword>
<keyword id="KW-0862">Zinc</keyword>
<proteinExistence type="inferred from homology"/>
<reference key="1">
    <citation type="journal article" date="2006" name="J. Bacteriol.">
        <title>Complete genome sequence of Yersinia pestis strains Antiqua and Nepal516: evidence of gene reduction in an emerging pathogen.</title>
        <authorList>
            <person name="Chain P.S.G."/>
            <person name="Hu P."/>
            <person name="Malfatti S.A."/>
            <person name="Radnedge L."/>
            <person name="Larimer F."/>
            <person name="Vergez L.M."/>
            <person name="Worsham P."/>
            <person name="Chu M.C."/>
            <person name="Andersen G.L."/>
        </authorList>
    </citation>
    <scope>NUCLEOTIDE SEQUENCE [LARGE SCALE GENOMIC DNA]</scope>
    <source>
        <strain>Nepal516</strain>
    </source>
</reference>
<reference key="2">
    <citation type="submission" date="2009-04" db="EMBL/GenBank/DDBJ databases">
        <title>Yersinia pestis Nepal516A whole genome shotgun sequencing project.</title>
        <authorList>
            <person name="Plunkett G. III"/>
            <person name="Anderson B.D."/>
            <person name="Baumler D.J."/>
            <person name="Burland V."/>
            <person name="Cabot E.L."/>
            <person name="Glasner J.D."/>
            <person name="Mau B."/>
            <person name="Neeno-Eckwall E."/>
            <person name="Perna N.T."/>
            <person name="Munk A.C."/>
            <person name="Tapia R."/>
            <person name="Green L.D."/>
            <person name="Rogers Y.C."/>
            <person name="Detter J.C."/>
            <person name="Bruce D.C."/>
            <person name="Brettin T.S."/>
        </authorList>
    </citation>
    <scope>NUCLEOTIDE SEQUENCE [LARGE SCALE GENOMIC DNA]</scope>
    <source>
        <strain>Nepal516</strain>
    </source>
</reference>
<name>TGT_YERPN</name>